<organism>
    <name type="scientific">Vesicomyosocius okutanii subsp. Calyptogena okutanii (strain HA)</name>
    <dbReference type="NCBI Taxonomy" id="412965"/>
    <lineage>
        <taxon>Bacteria</taxon>
        <taxon>Pseudomonadati</taxon>
        <taxon>Pseudomonadota</taxon>
        <taxon>Gammaproteobacteria</taxon>
        <taxon>Candidatus Pseudothioglobaceae</taxon>
        <taxon>Candidatus Vesicomyosocius</taxon>
    </lineage>
</organism>
<sequence length="340" mass="37717">MIKVGIIGSTGYTGLELIRLLHNHPNAKIIALCSRINASKSVIKEFPSLISYIDLDFVTPNEKKLFECDIIFFATPHGVAMNSVSKFLNKDIKIIDLGADFRIKDSTEWSKWYGMTHTQGDLLKDAVYGLPEVYNSQIKNATLIANPGCYPTAIILALKPLLETNIIDTKSIIADCKSGVSGAGRSANIATLFCEVNESLKPYNVDQHRHKPETQQVLTDIAGKEVNFFFTPHLVPMTRGMLASIYVDLIKDINVQKLFEKHYQNNKFIHILPTNVYPQTKSVKGTNNCHIGIQKSNNKLIIMSVIDNIIKGASGQAIQNMNLMFGLDEGLGLEQIGLLP</sequence>
<comment type="function">
    <text evidence="1">Catalyzes the NADPH-dependent reduction of N-acetyl-5-glutamyl phosphate to yield N-acetyl-L-glutamate 5-semialdehyde.</text>
</comment>
<comment type="catalytic activity">
    <reaction evidence="1">
        <text>N-acetyl-L-glutamate 5-semialdehyde + phosphate + NADP(+) = N-acetyl-L-glutamyl 5-phosphate + NADPH + H(+)</text>
        <dbReference type="Rhea" id="RHEA:21588"/>
        <dbReference type="ChEBI" id="CHEBI:15378"/>
        <dbReference type="ChEBI" id="CHEBI:29123"/>
        <dbReference type="ChEBI" id="CHEBI:43474"/>
        <dbReference type="ChEBI" id="CHEBI:57783"/>
        <dbReference type="ChEBI" id="CHEBI:57936"/>
        <dbReference type="ChEBI" id="CHEBI:58349"/>
        <dbReference type="EC" id="1.2.1.38"/>
    </reaction>
</comment>
<comment type="pathway">
    <text evidence="1">Amino-acid biosynthesis; L-arginine biosynthesis; N(2)-acetyl-L-ornithine from L-glutamate: step 3/4.</text>
</comment>
<comment type="subcellular location">
    <subcellularLocation>
        <location evidence="1">Cytoplasm</location>
    </subcellularLocation>
</comment>
<comment type="similarity">
    <text evidence="1">Belongs to the NAGSA dehydrogenase family. Type 1 subfamily.</text>
</comment>
<keyword id="KW-0028">Amino-acid biosynthesis</keyword>
<keyword id="KW-0055">Arginine biosynthesis</keyword>
<keyword id="KW-0963">Cytoplasm</keyword>
<keyword id="KW-0521">NADP</keyword>
<keyword id="KW-0560">Oxidoreductase</keyword>
<keyword id="KW-1185">Reference proteome</keyword>
<feature type="chain" id="PRO_1000011081" description="N-acetyl-gamma-glutamyl-phosphate reductase">
    <location>
        <begin position="1"/>
        <end position="340"/>
    </location>
</feature>
<feature type="active site" evidence="1">
    <location>
        <position position="149"/>
    </location>
</feature>
<proteinExistence type="inferred from homology"/>
<evidence type="ECO:0000255" key="1">
    <source>
        <dbReference type="HAMAP-Rule" id="MF_00150"/>
    </source>
</evidence>
<name>ARGC_VESOH</name>
<reference key="1">
    <citation type="journal article" date="2007" name="Curr. Biol.">
        <title>Reduced genome of the thioautotrophic intracellular symbiont in a deep-sea clam, Calyptogena okutanii.</title>
        <authorList>
            <person name="Kuwahara H."/>
            <person name="Yoshida T."/>
            <person name="Takaki Y."/>
            <person name="Shimamura S."/>
            <person name="Nishi S."/>
            <person name="Harada M."/>
            <person name="Matsuyama K."/>
            <person name="Takishita K."/>
            <person name="Kawato M."/>
            <person name="Uematsu K."/>
            <person name="Fujiwara Y."/>
            <person name="Sato T."/>
            <person name="Kato C."/>
            <person name="Kitagawa M."/>
            <person name="Kato I."/>
            <person name="Maruyama T."/>
        </authorList>
    </citation>
    <scope>NUCLEOTIDE SEQUENCE [LARGE SCALE GENOMIC DNA]</scope>
    <source>
        <strain>HA</strain>
    </source>
</reference>
<gene>
    <name evidence="1" type="primary">argC</name>
    <name type="ordered locus">COSY_0960</name>
</gene>
<protein>
    <recommendedName>
        <fullName evidence="1">N-acetyl-gamma-glutamyl-phosphate reductase</fullName>
        <shortName evidence="1">AGPR</shortName>
        <ecNumber evidence="1">1.2.1.38</ecNumber>
    </recommendedName>
    <alternativeName>
        <fullName evidence="1">N-acetyl-glutamate semialdehyde dehydrogenase</fullName>
        <shortName evidence="1">NAGSA dehydrogenase</shortName>
    </alternativeName>
</protein>
<dbReference type="EC" id="1.2.1.38" evidence="1"/>
<dbReference type="EMBL" id="AP009247">
    <property type="protein sequence ID" value="BAF62059.1"/>
    <property type="molecule type" value="Genomic_DNA"/>
</dbReference>
<dbReference type="RefSeq" id="WP_011930328.1">
    <property type="nucleotide sequence ID" value="NC_009465.1"/>
</dbReference>
<dbReference type="SMR" id="A5CVH0"/>
<dbReference type="STRING" id="412965.COSY_0960"/>
<dbReference type="KEGG" id="vok:COSY_0960"/>
<dbReference type="eggNOG" id="COG0002">
    <property type="taxonomic scope" value="Bacteria"/>
</dbReference>
<dbReference type="HOGENOM" id="CLU_006384_0_1_6"/>
<dbReference type="OrthoDB" id="9801289at2"/>
<dbReference type="UniPathway" id="UPA00068">
    <property type="reaction ID" value="UER00108"/>
</dbReference>
<dbReference type="Proteomes" id="UP000000247">
    <property type="component" value="Chromosome"/>
</dbReference>
<dbReference type="GO" id="GO:0005737">
    <property type="term" value="C:cytoplasm"/>
    <property type="evidence" value="ECO:0007669"/>
    <property type="project" value="UniProtKB-SubCell"/>
</dbReference>
<dbReference type="GO" id="GO:0003942">
    <property type="term" value="F:N-acetyl-gamma-glutamyl-phosphate reductase activity"/>
    <property type="evidence" value="ECO:0007669"/>
    <property type="project" value="UniProtKB-UniRule"/>
</dbReference>
<dbReference type="GO" id="GO:0051287">
    <property type="term" value="F:NAD binding"/>
    <property type="evidence" value="ECO:0007669"/>
    <property type="project" value="InterPro"/>
</dbReference>
<dbReference type="GO" id="GO:0070401">
    <property type="term" value="F:NADP+ binding"/>
    <property type="evidence" value="ECO:0007669"/>
    <property type="project" value="InterPro"/>
</dbReference>
<dbReference type="GO" id="GO:0006526">
    <property type="term" value="P:L-arginine biosynthetic process"/>
    <property type="evidence" value="ECO:0007669"/>
    <property type="project" value="UniProtKB-UniRule"/>
</dbReference>
<dbReference type="CDD" id="cd23934">
    <property type="entry name" value="AGPR_1_C"/>
    <property type="match status" value="1"/>
</dbReference>
<dbReference type="CDD" id="cd17895">
    <property type="entry name" value="AGPR_1_N"/>
    <property type="match status" value="1"/>
</dbReference>
<dbReference type="FunFam" id="3.30.360.10:FF:000014">
    <property type="entry name" value="N-acetyl-gamma-glutamyl-phosphate reductase"/>
    <property type="match status" value="1"/>
</dbReference>
<dbReference type="Gene3D" id="3.30.360.10">
    <property type="entry name" value="Dihydrodipicolinate Reductase, domain 2"/>
    <property type="match status" value="1"/>
</dbReference>
<dbReference type="Gene3D" id="3.40.50.720">
    <property type="entry name" value="NAD(P)-binding Rossmann-like Domain"/>
    <property type="match status" value="1"/>
</dbReference>
<dbReference type="HAMAP" id="MF_00150">
    <property type="entry name" value="ArgC_type1"/>
    <property type="match status" value="1"/>
</dbReference>
<dbReference type="InterPro" id="IPR023013">
    <property type="entry name" value="AGPR_AS"/>
</dbReference>
<dbReference type="InterPro" id="IPR000706">
    <property type="entry name" value="AGPR_type-1"/>
</dbReference>
<dbReference type="InterPro" id="IPR036291">
    <property type="entry name" value="NAD(P)-bd_dom_sf"/>
</dbReference>
<dbReference type="InterPro" id="IPR050085">
    <property type="entry name" value="NAGSA_dehydrogenase"/>
</dbReference>
<dbReference type="InterPro" id="IPR000534">
    <property type="entry name" value="Semialdehyde_DH_NAD-bd"/>
</dbReference>
<dbReference type="NCBIfam" id="TIGR01850">
    <property type="entry name" value="argC"/>
    <property type="match status" value="1"/>
</dbReference>
<dbReference type="PANTHER" id="PTHR32338:SF10">
    <property type="entry name" value="N-ACETYL-GAMMA-GLUTAMYL-PHOSPHATE REDUCTASE, CHLOROPLASTIC-RELATED"/>
    <property type="match status" value="1"/>
</dbReference>
<dbReference type="PANTHER" id="PTHR32338">
    <property type="entry name" value="N-ACETYL-GAMMA-GLUTAMYL-PHOSPHATE REDUCTASE, CHLOROPLASTIC-RELATED-RELATED"/>
    <property type="match status" value="1"/>
</dbReference>
<dbReference type="Pfam" id="PF01118">
    <property type="entry name" value="Semialdhyde_dh"/>
    <property type="match status" value="1"/>
</dbReference>
<dbReference type="Pfam" id="PF22698">
    <property type="entry name" value="Semialdhyde_dhC_1"/>
    <property type="match status" value="1"/>
</dbReference>
<dbReference type="SMART" id="SM00859">
    <property type="entry name" value="Semialdhyde_dh"/>
    <property type="match status" value="1"/>
</dbReference>
<dbReference type="SUPFAM" id="SSF55347">
    <property type="entry name" value="Glyceraldehyde-3-phosphate dehydrogenase-like, C-terminal domain"/>
    <property type="match status" value="1"/>
</dbReference>
<dbReference type="SUPFAM" id="SSF51735">
    <property type="entry name" value="NAD(P)-binding Rossmann-fold domains"/>
    <property type="match status" value="1"/>
</dbReference>
<dbReference type="PROSITE" id="PS01224">
    <property type="entry name" value="ARGC"/>
    <property type="match status" value="1"/>
</dbReference>
<accession>A5CVH0</accession>